<organism>
    <name type="scientific">Escherichia coli O9:H4 (strain HS)</name>
    <dbReference type="NCBI Taxonomy" id="331112"/>
    <lineage>
        <taxon>Bacteria</taxon>
        <taxon>Pseudomonadati</taxon>
        <taxon>Pseudomonadota</taxon>
        <taxon>Gammaproteobacteria</taxon>
        <taxon>Enterobacterales</taxon>
        <taxon>Enterobacteriaceae</taxon>
        <taxon>Escherichia</taxon>
    </lineage>
</organism>
<keyword id="KW-0963">Cytoplasm</keyword>
<keyword id="KW-0238">DNA-binding</keyword>
<keyword id="KW-0678">Repressor</keyword>
<keyword id="KW-0804">Transcription</keyword>
<keyword id="KW-0805">Transcription regulation</keyword>
<reference key="1">
    <citation type="journal article" date="2008" name="J. Bacteriol.">
        <title>The pangenome structure of Escherichia coli: comparative genomic analysis of E. coli commensal and pathogenic isolates.</title>
        <authorList>
            <person name="Rasko D.A."/>
            <person name="Rosovitz M.J."/>
            <person name="Myers G.S.A."/>
            <person name="Mongodin E.F."/>
            <person name="Fricke W.F."/>
            <person name="Gajer P."/>
            <person name="Crabtree J."/>
            <person name="Sebaihia M."/>
            <person name="Thomson N.R."/>
            <person name="Chaudhuri R."/>
            <person name="Henderson I.R."/>
            <person name="Sperandio V."/>
            <person name="Ravel J."/>
        </authorList>
    </citation>
    <scope>NUCLEOTIDE SEQUENCE [LARGE SCALE GENOMIC DNA]</scope>
    <source>
        <strain>HS</strain>
    </source>
</reference>
<gene>
    <name evidence="1" type="primary">trpR</name>
    <name type="ordered locus">EcHS_A4629</name>
</gene>
<sequence length="108" mass="12355">MAQQSPYSAAMAEQRHQEWLRFVDLLKNAYQNDLHLPLLNLMLTPDEREALGTRVRIVEELLRGEMSQRELKNELGAGIATITRGSNSLKAAPVELRQWLEEVLLKSD</sequence>
<proteinExistence type="inferred from homology"/>
<dbReference type="EMBL" id="CP000802">
    <property type="protein sequence ID" value="ABV08776.1"/>
    <property type="molecule type" value="Genomic_DNA"/>
</dbReference>
<dbReference type="RefSeq" id="WP_000068679.1">
    <property type="nucleotide sequence ID" value="NC_009800.1"/>
</dbReference>
<dbReference type="BMRB" id="A8A8C2"/>
<dbReference type="SMR" id="A8A8C2"/>
<dbReference type="GeneID" id="93777452"/>
<dbReference type="KEGG" id="ecx:EcHS_A4629"/>
<dbReference type="HOGENOM" id="CLU_147939_0_0_6"/>
<dbReference type="GO" id="GO:0005737">
    <property type="term" value="C:cytoplasm"/>
    <property type="evidence" value="ECO:0007669"/>
    <property type="project" value="UniProtKB-SubCell"/>
</dbReference>
<dbReference type="GO" id="GO:0003700">
    <property type="term" value="F:DNA-binding transcription factor activity"/>
    <property type="evidence" value="ECO:0007669"/>
    <property type="project" value="InterPro"/>
</dbReference>
<dbReference type="GO" id="GO:0043565">
    <property type="term" value="F:sequence-specific DNA binding"/>
    <property type="evidence" value="ECO:0007669"/>
    <property type="project" value="InterPro"/>
</dbReference>
<dbReference type="GO" id="GO:0045892">
    <property type="term" value="P:negative regulation of DNA-templated transcription"/>
    <property type="evidence" value="ECO:0007669"/>
    <property type="project" value="UniProtKB-UniRule"/>
</dbReference>
<dbReference type="FunFam" id="1.10.1270.10:FF:000001">
    <property type="entry name" value="Trp operon repressor"/>
    <property type="match status" value="1"/>
</dbReference>
<dbReference type="Gene3D" id="1.10.1270.10">
    <property type="entry name" value="TrpR-like"/>
    <property type="match status" value="1"/>
</dbReference>
<dbReference type="HAMAP" id="MF_00475">
    <property type="entry name" value="Trp_repressor"/>
    <property type="match status" value="1"/>
</dbReference>
<dbReference type="InterPro" id="IPR000831">
    <property type="entry name" value="Trp_repress"/>
</dbReference>
<dbReference type="InterPro" id="IPR013335">
    <property type="entry name" value="Trp_repress_bac"/>
</dbReference>
<dbReference type="InterPro" id="IPR010921">
    <property type="entry name" value="Trp_repressor/repl_initiator"/>
</dbReference>
<dbReference type="InterPro" id="IPR038116">
    <property type="entry name" value="TrpR-like_sf"/>
</dbReference>
<dbReference type="NCBIfam" id="TIGR01321">
    <property type="entry name" value="TrpR"/>
    <property type="match status" value="1"/>
</dbReference>
<dbReference type="PANTHER" id="PTHR38025">
    <property type="entry name" value="TRP OPERON REPRESSOR"/>
    <property type="match status" value="1"/>
</dbReference>
<dbReference type="PANTHER" id="PTHR38025:SF1">
    <property type="entry name" value="TRP OPERON REPRESSOR"/>
    <property type="match status" value="1"/>
</dbReference>
<dbReference type="Pfam" id="PF01371">
    <property type="entry name" value="Trp_repressor"/>
    <property type="match status" value="1"/>
</dbReference>
<dbReference type="PIRSF" id="PIRSF003196">
    <property type="entry name" value="Trp_repressor"/>
    <property type="match status" value="1"/>
</dbReference>
<dbReference type="SUPFAM" id="SSF48295">
    <property type="entry name" value="TrpR-like"/>
    <property type="match status" value="1"/>
</dbReference>
<protein>
    <recommendedName>
        <fullName evidence="1">Trp operon repressor</fullName>
    </recommendedName>
</protein>
<feature type="chain" id="PRO_1000060402" description="Trp operon repressor">
    <location>
        <begin position="1"/>
        <end position="108"/>
    </location>
</feature>
<feature type="DNA-binding region" evidence="1">
    <location>
        <begin position="68"/>
        <end position="91"/>
    </location>
</feature>
<comment type="function">
    <text evidence="1">This protein is an aporepressor. When complexed with L-tryptophan it binds the operator region of the trp operon (5'-ACTAGT-'3') and prevents the initiation of transcription. The complex also regulates trp repressor biosynthesis by binding to its regulatory region.</text>
</comment>
<comment type="subunit">
    <text evidence="1">Homodimer.</text>
</comment>
<comment type="subcellular location">
    <subcellularLocation>
        <location evidence="1">Cytoplasm</location>
    </subcellularLocation>
</comment>
<comment type="similarity">
    <text evidence="1">Belongs to the TrpR family.</text>
</comment>
<evidence type="ECO:0000255" key="1">
    <source>
        <dbReference type="HAMAP-Rule" id="MF_00475"/>
    </source>
</evidence>
<accession>A8A8C2</accession>
<name>TRPR_ECOHS</name>